<reference key="1">
    <citation type="journal article" date="2009" name="J. Plant Physiol.">
        <title>Fatty acid alpha-dioxygenase from Pisum sativum: temporal and spatial regulation during germination and plant development.</title>
        <authorList>
            <person name="Meisner A.K."/>
            <person name="Saffert A."/>
            <person name="Schreier P."/>
            <person name="Schoen A."/>
        </authorList>
    </citation>
    <scope>NUCLEOTIDE SEQUENCE [MRNA]</scope>
    <scope>FUNCTION</scope>
    <scope>DEVELOPMENTAL STAGE</scope>
</reference>
<reference key="2">
    <citation type="journal article" date="2000" name="Plant Physiol.">
        <title>A dual function alpha-dioxygenase-peroxidase and NAD(+) oxidoreductase active enzyme from germinating pea rationalizing alpha-oxidation of fatty acids in plants.</title>
        <authorList>
            <person name="Saffert A."/>
            <person name="Hartmann-Schreier J."/>
            <person name="Schoen A."/>
            <person name="Schreier P."/>
        </authorList>
    </citation>
    <scope>PROTEIN SEQUENCE OF 447-457 AND 567-575</scope>
    <scope>FUNCTION</scope>
    <scope>CATALYTIC ACTIVITY</scope>
    <scope>BIOPHYSICOCHEMICAL PROPERTIES</scope>
</reference>
<gene>
    <name evidence="6" type="primary">alphaDOX1</name>
</gene>
<organism>
    <name type="scientific">Pisum sativum</name>
    <name type="common">Garden pea</name>
    <name type="synonym">Lathyrus oleraceus</name>
    <dbReference type="NCBI Taxonomy" id="3888"/>
    <lineage>
        <taxon>Eukaryota</taxon>
        <taxon>Viridiplantae</taxon>
        <taxon>Streptophyta</taxon>
        <taxon>Embryophyta</taxon>
        <taxon>Tracheophyta</taxon>
        <taxon>Spermatophyta</taxon>
        <taxon>Magnoliopsida</taxon>
        <taxon>eudicotyledons</taxon>
        <taxon>Gunneridae</taxon>
        <taxon>Pentapetalae</taxon>
        <taxon>rosids</taxon>
        <taxon>fabids</taxon>
        <taxon>Fabales</taxon>
        <taxon>Fabaceae</taxon>
        <taxon>Papilionoideae</taxon>
        <taxon>50 kb inversion clade</taxon>
        <taxon>NPAAA clade</taxon>
        <taxon>Hologalegina</taxon>
        <taxon>IRL clade</taxon>
        <taxon>Fabeae</taxon>
        <taxon>Pisum</taxon>
    </lineage>
</organism>
<proteinExistence type="evidence at protein level"/>
<dbReference type="EC" id="1.13.11.92" evidence="3"/>
<dbReference type="EMBL" id="AJ784963">
    <property type="protein sequence ID" value="CAH05011.1"/>
    <property type="molecule type" value="mRNA"/>
</dbReference>
<dbReference type="SMR" id="Q5GQ66"/>
<dbReference type="PeroxiBase" id="5968">
    <property type="entry name" value="PsDiOx01"/>
</dbReference>
<dbReference type="EnsemblPlants" id="Psat0s3643g0040.1">
    <property type="protein sequence ID" value="Psat0s3643g0040.1.cds"/>
    <property type="gene ID" value="Psat0s3643g0040"/>
</dbReference>
<dbReference type="Gramene" id="Psat0s3643g0040.1">
    <property type="protein sequence ID" value="Psat0s3643g0040.1.cds"/>
    <property type="gene ID" value="Psat0s3643g0040"/>
</dbReference>
<dbReference type="KEGG" id="ag:CAH05011"/>
<dbReference type="OrthoDB" id="823504at2759"/>
<dbReference type="BioCyc" id="MetaCyc:MONOMER-5641"/>
<dbReference type="BRENDA" id="1.13.11.92">
    <property type="organism ID" value="4872"/>
</dbReference>
<dbReference type="GO" id="GO:0020037">
    <property type="term" value="F:heme binding"/>
    <property type="evidence" value="ECO:0007669"/>
    <property type="project" value="InterPro"/>
</dbReference>
<dbReference type="GO" id="GO:0046872">
    <property type="term" value="F:metal ion binding"/>
    <property type="evidence" value="ECO:0007669"/>
    <property type="project" value="UniProtKB-KW"/>
</dbReference>
<dbReference type="GO" id="GO:0016702">
    <property type="term" value="F:oxidoreductase activity, acting on single donors with incorporation of molecular oxygen, incorporation of two atoms of oxygen"/>
    <property type="evidence" value="ECO:0007669"/>
    <property type="project" value="TreeGrafter"/>
</dbReference>
<dbReference type="GO" id="GO:0004601">
    <property type="term" value="F:peroxidase activity"/>
    <property type="evidence" value="ECO:0007669"/>
    <property type="project" value="UniProtKB-KW"/>
</dbReference>
<dbReference type="GO" id="GO:0006952">
    <property type="term" value="P:defense response"/>
    <property type="evidence" value="ECO:0007669"/>
    <property type="project" value="UniProtKB-KW"/>
</dbReference>
<dbReference type="GO" id="GO:0006633">
    <property type="term" value="P:fatty acid biosynthetic process"/>
    <property type="evidence" value="ECO:0007669"/>
    <property type="project" value="UniProtKB-KW"/>
</dbReference>
<dbReference type="GO" id="GO:0031408">
    <property type="term" value="P:oxylipin biosynthetic process"/>
    <property type="evidence" value="ECO:0007669"/>
    <property type="project" value="UniProtKB-KW"/>
</dbReference>
<dbReference type="GO" id="GO:0006979">
    <property type="term" value="P:response to oxidative stress"/>
    <property type="evidence" value="ECO:0007669"/>
    <property type="project" value="InterPro"/>
</dbReference>
<dbReference type="CDD" id="cd09818">
    <property type="entry name" value="PIOX_like"/>
    <property type="match status" value="1"/>
</dbReference>
<dbReference type="Gene3D" id="1.10.640.10">
    <property type="entry name" value="Haem peroxidase domain superfamily, animal type"/>
    <property type="match status" value="1"/>
</dbReference>
<dbReference type="InterPro" id="IPR034815">
    <property type="entry name" value="A_dioxygenase"/>
</dbReference>
<dbReference type="InterPro" id="IPR019791">
    <property type="entry name" value="Haem_peroxidase_animal"/>
</dbReference>
<dbReference type="InterPro" id="IPR010255">
    <property type="entry name" value="Haem_peroxidase_sf"/>
</dbReference>
<dbReference type="InterPro" id="IPR037120">
    <property type="entry name" value="Haem_peroxidase_sf_animal"/>
</dbReference>
<dbReference type="InterPro" id="IPR050783">
    <property type="entry name" value="Oxylipin_biosynth_metab"/>
</dbReference>
<dbReference type="PANTHER" id="PTHR11903:SF11">
    <property type="entry name" value="ALPHA-DIOXYGENASE 1"/>
    <property type="match status" value="1"/>
</dbReference>
<dbReference type="PANTHER" id="PTHR11903">
    <property type="entry name" value="PROSTAGLANDIN G/H SYNTHASE"/>
    <property type="match status" value="1"/>
</dbReference>
<dbReference type="Pfam" id="PF03098">
    <property type="entry name" value="An_peroxidase"/>
    <property type="match status" value="1"/>
</dbReference>
<dbReference type="SUPFAM" id="SSF48113">
    <property type="entry name" value="Heme-dependent peroxidases"/>
    <property type="match status" value="1"/>
</dbReference>
<dbReference type="PROSITE" id="PS50292">
    <property type="entry name" value="PEROXIDASE_3"/>
    <property type="match status" value="1"/>
</dbReference>
<accession>Q5GQ66</accession>
<name>PIOX_PEA</name>
<sequence length="643" mass="73297">MWSIVTDPIKDLISKVVKNSIHPDFHDAVSKMTIIDAFLFFIVHSIDKLGIWHRLPVFFGLLYLAIRRHLHQEYNLLNVGTTPVGIRSNPSDFPYRTADGRYNDPFNDGAGSQGSFFGRNILPVDQKNKLLKPDPMVVVTKLLERKTYKDTGTQFNVIAASWIQFMIHDWIDHMEDTKQVELSAPSEVASQCPLKSFKFFKTKEIPTGFYDIKTGHANVRTPWWDGSVVYGSNEQVLNKVRTFKDGKLKISKEGHLLHNEDGTAISGDIRNSWAGVTTLQTLFVQEHNAVCDALKKENSDLEDEDLYRHARLVTSAVIAKIHTIDWTVELLKTDTLLAGMRANWYGLLGKQFKDRFGHVGNSILSGFVGMKRSENHGVPYSLTEEFATVYRMHPLLPDSLHLRDISASPGPNKSPPLIKEIPMNDLIGLQGEKTLLEIGNAKKLVSMGHQACGALELWNYPSWLRNLVPHNIDGTERSDHVDLAALEVYRDRERNVARYNQFRRGLLLIPISKWEDLTDDEEAIKVLEEVYGDDVEELDVLVGLMAEKKIKGFAISETAFVIFLLMASRRLEADRFFTSNFNEETYTKKGLEWVNTTESLKDVIDRHHPEMTHKWLNSSSAFSVWDTSPNKHNHIPIYFRVPN</sequence>
<evidence type="ECO:0000250" key="1">
    <source>
        <dbReference type="UniProtKB" id="Q9SGH6"/>
    </source>
</evidence>
<evidence type="ECO:0000255" key="2">
    <source>
        <dbReference type="PROSITE-ProRule" id="PRU00298"/>
    </source>
</evidence>
<evidence type="ECO:0000269" key="3">
    <source>
    </source>
</evidence>
<evidence type="ECO:0000269" key="4">
    <source>
    </source>
</evidence>
<evidence type="ECO:0000303" key="5">
    <source>
    </source>
</evidence>
<evidence type="ECO:0000303" key="6">
    <source>
    </source>
</evidence>
<evidence type="ECO:0000305" key="7"/>
<feature type="chain" id="PRO_0000455383" description="Alpha-dioxygenase PIOX">
    <location>
        <begin position="1"/>
        <end position="643"/>
    </location>
</feature>
<feature type="active site" description="Proton acceptor" evidence="2">
    <location>
        <position position="168"/>
    </location>
</feature>
<feature type="binding site" evidence="1">
    <location>
        <position position="169"/>
    </location>
    <ligand>
        <name>Ca(2+)</name>
        <dbReference type="ChEBI" id="CHEBI:29108"/>
    </ligand>
</feature>
<feature type="binding site" evidence="1">
    <location>
        <position position="173"/>
    </location>
    <ligand>
        <name>heme b</name>
        <dbReference type="ChEBI" id="CHEBI:60344"/>
    </ligand>
</feature>
<feature type="binding site" evidence="1">
    <location>
        <position position="221"/>
    </location>
    <ligand>
        <name>Ca(2+)</name>
        <dbReference type="ChEBI" id="CHEBI:29108"/>
    </ligand>
</feature>
<feature type="binding site" evidence="1">
    <location>
        <position position="223"/>
    </location>
    <ligand>
        <name>Ca(2+)</name>
        <dbReference type="ChEBI" id="CHEBI:29108"/>
    </ligand>
</feature>
<feature type="binding site" evidence="1">
    <location>
        <position position="225"/>
    </location>
    <ligand>
        <name>Ca(2+)</name>
        <dbReference type="ChEBI" id="CHEBI:29108"/>
    </ligand>
</feature>
<feature type="binding site" evidence="1">
    <location>
        <position position="227"/>
    </location>
    <ligand>
        <name>Ca(2+)</name>
        <dbReference type="ChEBI" id="CHEBI:29108"/>
    </ligand>
</feature>
<feature type="binding site" description="axial binding residue" evidence="2">
    <location>
        <position position="393"/>
    </location>
    <ligand>
        <name>heme b</name>
        <dbReference type="ChEBI" id="CHEBI:60344"/>
    </ligand>
    <ligandPart>
        <name>Fe</name>
        <dbReference type="ChEBI" id="CHEBI:18248"/>
    </ligandPart>
</feature>
<feature type="binding site" evidence="1">
    <location>
        <position position="490"/>
    </location>
    <ligand>
        <name>heme b</name>
        <dbReference type="ChEBI" id="CHEBI:60344"/>
    </ligand>
</feature>
<feature type="binding site" evidence="1">
    <location>
        <position position="494"/>
    </location>
    <ligand>
        <name>heme b</name>
        <dbReference type="ChEBI" id="CHEBI:60344"/>
    </ligand>
</feature>
<feature type="site" description="Transition state stabilizer" evidence="2">
    <location>
        <position position="270"/>
    </location>
</feature>
<keyword id="KW-0106">Calcium</keyword>
<keyword id="KW-0223">Dioxygenase</keyword>
<keyword id="KW-0903">Direct protein sequencing</keyword>
<keyword id="KW-0275">Fatty acid biosynthesis</keyword>
<keyword id="KW-0276">Fatty acid metabolism</keyword>
<keyword id="KW-0349">Heme</keyword>
<keyword id="KW-0408">Iron</keyword>
<keyword id="KW-0444">Lipid biosynthesis</keyword>
<keyword id="KW-0443">Lipid metabolism</keyword>
<keyword id="KW-0479">Metal-binding</keyword>
<keyword id="KW-0560">Oxidoreductase</keyword>
<keyword id="KW-0925">Oxylipin biosynthesis</keyword>
<keyword id="KW-0575">Peroxidase</keyword>
<keyword id="KW-0611">Plant defense</keyword>
<protein>
    <recommendedName>
        <fullName evidence="7">Alpha-dioxygenase PIOX</fullName>
        <ecNumber evidence="3">1.13.11.92</ecNumber>
    </recommendedName>
    <alternativeName>
        <fullName evidence="5">Pathogen-induced oxygenase</fullName>
    </alternativeName>
</protein>
<comment type="function">
    <text evidence="3 4">Alpha-dioxygenase that catalyzes the primary oxygenation step of a variety of 14-20 carbon fatty acids, containing up to three unsaturated bonds, into their corresponding 2R-hydroperoxides (PubMed:10938370, PubMed:18760499). Involved in the production of oxylipins that function in cell signaling, wound healing, and protection from infection (PubMed:10938370, PubMed:18760499). The alpha-oxidation pathway of fatty acids may play a role during plant developmental processes (PubMed:18760499).</text>
</comment>
<comment type="catalytic activity">
    <reaction evidence="3">
        <text>hexadecanoate + O2 = (2R)-2-hydroperoxyhexadecanoate</text>
        <dbReference type="Rhea" id="RHEA:63836"/>
        <dbReference type="ChEBI" id="CHEBI:7896"/>
        <dbReference type="ChEBI" id="CHEBI:15379"/>
        <dbReference type="ChEBI" id="CHEBI:149616"/>
        <dbReference type="EC" id="1.13.11.92"/>
    </reaction>
    <physiologicalReaction direction="left-to-right" evidence="3">
        <dbReference type="Rhea" id="RHEA:63837"/>
    </physiologicalReaction>
</comment>
<comment type="catalytic activity">
    <reaction evidence="3">
        <text>dodecanoate + O2 = (2R)-2-hydroperoxydodecanoate</text>
        <dbReference type="Rhea" id="RHEA:63852"/>
        <dbReference type="ChEBI" id="CHEBI:15379"/>
        <dbReference type="ChEBI" id="CHEBI:18262"/>
        <dbReference type="ChEBI" id="CHEBI:149611"/>
        <dbReference type="EC" id="1.13.11.92"/>
    </reaction>
    <physiologicalReaction direction="left-to-right" evidence="3">
        <dbReference type="Rhea" id="RHEA:63853"/>
    </physiologicalReaction>
</comment>
<comment type="cofactor">
    <cofactor evidence="1">
        <name>heme b</name>
        <dbReference type="ChEBI" id="CHEBI:60344"/>
    </cofactor>
    <text evidence="1">Binds 1 heme b (iron(II)-protoporphyrin IX) group per subunit.</text>
</comment>
<comment type="cofactor">
    <cofactor evidence="1">
        <name>Ca(2+)</name>
        <dbReference type="ChEBI" id="CHEBI:29108"/>
    </cofactor>
    <text evidence="1">Binds 1 calcium ion per subunit.</text>
</comment>
<comment type="biophysicochemical properties">
    <kinetics>
        <KM evidence="3">70 uM for O2</KM>
        <KM evidence="3">55 uM for dodecanoate</KM>
    </kinetics>
</comment>
<comment type="developmental stage">
    <text evidence="4">Expressed in germinating seeds and then root seedlings up to 12 days after imbibition.</text>
</comment>
<comment type="similarity">
    <text evidence="2">Belongs to the peroxidase family.</text>
</comment>